<protein>
    <recommendedName>
        <fullName evidence="1">Outer capsid protein VP4</fullName>
    </recommendedName>
    <alternativeName>
        <fullName evidence="1">Hemagglutinin</fullName>
    </alternativeName>
    <component>
        <recommendedName>
            <fullName evidence="1">Outer capsid protein VP8*</fullName>
        </recommendedName>
    </component>
    <component>
        <recommendedName>
            <fullName evidence="1">Outer capsid protein VP5*</fullName>
        </recommendedName>
    </component>
</protein>
<keyword id="KW-0167">Capsid protein</keyword>
<keyword id="KW-0175">Coiled coil</keyword>
<keyword id="KW-1015">Disulfide bond</keyword>
<keyword id="KW-0348">Hemagglutinin</keyword>
<keyword id="KW-1032">Host cell membrane</keyword>
<keyword id="KW-1035">Host cytoplasm</keyword>
<keyword id="KW-1037">Host cytoskeleton</keyword>
<keyword id="KW-1038">Host endoplasmic reticulum</keyword>
<keyword id="KW-1043">Host membrane</keyword>
<keyword id="KW-0945">Host-virus interaction</keyword>
<keyword id="KW-0472">Membrane</keyword>
<keyword id="KW-1152">Outer capsid protein</keyword>
<keyword id="KW-1161">Viral attachment to host cell</keyword>
<keyword id="KW-1162">Viral penetration into host cytoplasm</keyword>
<keyword id="KW-1173">Viral penetration via permeabilization of host membrane</keyword>
<keyword id="KW-0946">Virion</keyword>
<keyword id="KW-1160">Virus entry into host cell</keyword>
<proteinExistence type="inferred from homology"/>
<dbReference type="EMBL" id="M63267">
    <property type="protein sequence ID" value="AAA47320.1"/>
    <property type="molecule type" value="Genomic_RNA"/>
</dbReference>
<dbReference type="PIR" id="B40508">
    <property type="entry name" value="VPXRB6"/>
</dbReference>
<dbReference type="SMR" id="P25173"/>
<dbReference type="GO" id="GO:0044172">
    <property type="term" value="C:host cell endoplasmic reticulum-Golgi intermediate compartment"/>
    <property type="evidence" value="ECO:0007669"/>
    <property type="project" value="UniProtKB-SubCell"/>
</dbReference>
<dbReference type="GO" id="GO:0020002">
    <property type="term" value="C:host cell plasma membrane"/>
    <property type="evidence" value="ECO:0007669"/>
    <property type="project" value="UniProtKB-SubCell"/>
</dbReference>
<dbReference type="GO" id="GO:0044168">
    <property type="term" value="C:host cell rough endoplasmic reticulum"/>
    <property type="evidence" value="ECO:0007669"/>
    <property type="project" value="UniProtKB-SubCell"/>
</dbReference>
<dbReference type="GO" id="GO:0044163">
    <property type="term" value="C:host cytoskeleton"/>
    <property type="evidence" value="ECO:0007669"/>
    <property type="project" value="UniProtKB-SubCell"/>
</dbReference>
<dbReference type="GO" id="GO:0016020">
    <property type="term" value="C:membrane"/>
    <property type="evidence" value="ECO:0007669"/>
    <property type="project" value="UniProtKB-KW"/>
</dbReference>
<dbReference type="GO" id="GO:0039624">
    <property type="term" value="C:viral outer capsid"/>
    <property type="evidence" value="ECO:0007669"/>
    <property type="project" value="UniProtKB-UniRule"/>
</dbReference>
<dbReference type="GO" id="GO:0039665">
    <property type="term" value="P:permeabilization of host organelle membrane involved in viral entry into host cell"/>
    <property type="evidence" value="ECO:0007669"/>
    <property type="project" value="UniProtKB-UniRule"/>
</dbReference>
<dbReference type="GO" id="GO:0019062">
    <property type="term" value="P:virion attachment to host cell"/>
    <property type="evidence" value="ECO:0007669"/>
    <property type="project" value="UniProtKB-UniRule"/>
</dbReference>
<dbReference type="Gene3D" id="1.20.5.170">
    <property type="match status" value="1"/>
</dbReference>
<dbReference type="Gene3D" id="2.60.120.200">
    <property type="match status" value="1"/>
</dbReference>
<dbReference type="HAMAP" id="MF_04132">
    <property type="entry name" value="Rota_A_VP4"/>
    <property type="match status" value="1"/>
</dbReference>
<dbReference type="HAMAP" id="MF_04125">
    <property type="entry name" value="Rota_VP4"/>
    <property type="match status" value="1"/>
</dbReference>
<dbReference type="InterPro" id="IPR013320">
    <property type="entry name" value="ConA-like_dom_sf"/>
</dbReference>
<dbReference type="InterPro" id="IPR042546">
    <property type="entry name" value="Rota_A_VP4"/>
</dbReference>
<dbReference type="InterPro" id="IPR035330">
    <property type="entry name" value="Rota_VP4_MID"/>
</dbReference>
<dbReference type="InterPro" id="IPR038017">
    <property type="entry name" value="Rota_VP4_MID_sf"/>
</dbReference>
<dbReference type="InterPro" id="IPR000416">
    <property type="entry name" value="VP4_concanavalin-like"/>
</dbReference>
<dbReference type="InterPro" id="IPR035329">
    <property type="entry name" value="VP4_helical"/>
</dbReference>
<dbReference type="Pfam" id="PF17477">
    <property type="entry name" value="Rota_VP4_MID"/>
    <property type="match status" value="1"/>
</dbReference>
<dbReference type="Pfam" id="PF00426">
    <property type="entry name" value="VP4_haemagglut"/>
    <property type="match status" value="1"/>
</dbReference>
<dbReference type="Pfam" id="PF17478">
    <property type="entry name" value="VP4_helical"/>
    <property type="match status" value="1"/>
</dbReference>
<dbReference type="SUPFAM" id="SSF49899">
    <property type="entry name" value="Concanavalin A-like lectins/glucanases"/>
    <property type="match status" value="1"/>
</dbReference>
<dbReference type="SUPFAM" id="SSF111379">
    <property type="entry name" value="VP4 membrane interaction domain"/>
    <property type="match status" value="1"/>
</dbReference>
<organismHost>
    <name type="scientific">Bos taurus</name>
    <name type="common">Bovine</name>
    <dbReference type="NCBI Taxonomy" id="9913"/>
</organismHost>
<sequence>MASLIYRQLLANSYAVDLSDEIQSVGSEKNQRVTVDPGPFAQTGYAPVNRGPGEVNDSTVVQPVLDGPYQPAPFDLPVGNRMLLAPTGPGVVVEGTDNSGRWLSVILIEPGVTSETRTYTMFGSSKQVLVSNVSDTKWKLFEMMKTAVDGDYAEWGTLLSDIKIYGMMKYGERLFIYEGETPNARTKGYIVTNYTSVEVRPYSDFYIISRSQESACTEYINNGLPPIQNTRNVVPLAISSRSIKPRKVQPNEDIVVSKTSLWKELQYNRDIIIRFRFDNSIIKAGGLGYKWAEISFKAANYQYNYISDGEEVTAHTTCSVNGVNDFSFNGGSLPTDFAISRYEVIKENSYVYVHYWDDSQAFRNMVYVRSLAANLNDVMCSGGDYSFALLVGQWPVMKGGAVTLHTAGVTLSTQFTDFVSLNSLRFRFRLSVEEPSFTITRTRVSKLYGLPAANPNGGREYYEVAGRFSLISLVPSNDDYQTPIMNSVTVRQDLERRLNELREEFNNLSQEIAVSQLIDLAILPLDMFSMFSGIEGTVNAAKSMATNVIRKFKSSKLASSVSMLTDSLSDAASSISRSTSIRSIGSTASAWTNISKQTQDAVNEVATISSQLSQISGKLRLKEITTQTEGMSFDDISAAVLKANIDRSIQVDKNALPDVITEASEKFIRNRAYRVIDGDEAFEASTDGRFFAYKVETLEEMPFDIEKFADLVTRSPVISAIIDFKTLKNLNDNYGITREQAFNLLRSNPKVLRGFMDQNNPIIKNRIEQLIMQCRL</sequence>
<accession>P25173</accession>
<reference key="1">
    <citation type="journal article" date="1991" name="J. Virol.">
        <title>Comparative amino acid sequence analysis of VP4 for VP7 serotype 6 bovine rotavirus strains NCDV, B641, and UK.</title>
        <authorList>
            <person name="Hardy M.E."/>
            <person name="Woode G.N."/>
            <person name="Xu Z."/>
            <person name="Gorziglia M."/>
        </authorList>
    </citation>
    <scope>NUCLEOTIDE SEQUENCE [GENOMIC RNA]</scope>
</reference>
<reference key="2">
    <citation type="journal article" date="2002" name="J. Virol.">
        <title>Initial interaction of rotavirus strains with N-acetylneuraminic (sialic) acid residues on the cell surface correlates with VP4 genotype, not species of origin.</title>
        <authorList>
            <person name="Ciarlet M."/>
            <person name="Ludert J.E."/>
            <person name="Iturriza-Gomara M."/>
            <person name="Liprandi F."/>
            <person name="Gray J.J."/>
            <person name="Desselberger U."/>
            <person name="Estes M.K."/>
        </authorList>
    </citation>
    <scope>SIALIC ACID INDEPENDENCY</scope>
</reference>
<reference key="3">
    <citation type="journal article" date="2006" name="Glycoconj. J.">
        <title>Role of sialic acids in rotavirus infection.</title>
        <authorList>
            <person name="Isa P."/>
            <person name="Arias C.F."/>
            <person name="Lopez S."/>
        </authorList>
    </citation>
    <scope>REVIEW</scope>
</reference>
<evidence type="ECO:0000255" key="1">
    <source>
        <dbReference type="HAMAP-Rule" id="MF_04132"/>
    </source>
</evidence>
<evidence type="ECO:0000269" key="2">
    <source>
    </source>
</evidence>
<evidence type="ECO:0000303" key="3">
    <source>
    </source>
</evidence>
<comment type="function">
    <molecule>Outer capsid protein VP4</molecule>
    <text evidence="1">Spike-forming protein that mediates virion attachment to the host epithelial cell receptors and plays a major role in cell penetration, determination of host range restriction and virulence. Rotavirus attachment and entry into the host cell probably involves multiple sequential contacts between the outer capsid proteins VP4 and VP7, and the cell receptors. It is subsequently lost, together with VP7, following virus entry into the host cell. Following entry into the host cell, low intracellular or intravesicular Ca(2+) concentration probably causes the calcium-stabilized VP7 trimers to dissociate from the virion. This step is probably necessary for the membrane-disrupting entry step and the release of VP4, which is locked onto the virion by VP7. During the virus exit from the host cell, VP4 seems to be required to target the newly formed virions to the host cell lipid rafts.</text>
</comment>
<comment type="function">
    <molecule>Outer capsid protein VP5*</molecule>
    <text evidence="1">Forms the spike 'foot' and 'body' and acts as a membrane permeabilization protein that mediates release of viral particles from endosomal compartments into the cytoplasm. During entry, the part of VP5* that protrudes from the virus folds back on itself and reorganizes from a local dimer to a trimer. This reorganization may be linked to membrane penetration by exposing VP5* hydrophobic region. In integrin-dependent strains, VP5* targets the integrin heterodimer ITGA2/ITGB1 for cell attachment.</text>
</comment>
<comment type="function">
    <molecule>Outer capsid protein VP8*</molecule>
    <text evidence="1">Forms the head of the spikes and mediates the recognition of specific host cell surface glycans. It is the viral hemagglutinin and an important target of neutralizing antibodies. In sialic acid-dependent strains, VP8* binds to host cell sialic acid, most probably a ganglioside, providing the initial contact. In some other strains, VP8* mediates the attachment to histo-blood group antigens (HBGAs) for viral entry.</text>
</comment>
<comment type="subunit">
    <molecule>Outer capsid protein VP4</molecule>
    <text evidence="1">Homotrimer. VP4 adopts a dimeric appearance above the capsid surface, while forming a trimeric base anchored inside the capsid layer. Only hints of the third molecule are observed above the capsid surface. It probably performs a series of molecular rearrangements during viral entry. Prior to trypsin cleavage, it is flexible. The priming trypsin cleavage triggers its rearrangement into rigid spikes with approximate two-fold symmetry of their protruding parts. After an unknown second triggering event, cleaved VP4 may undergo another rearrangement, in which two VP5* subunits fold back on themselves and join a third subunit to form a tightly associated trimer, shaped like a folded umbrella. Interacts with VP6. Interacts with VP7.</text>
</comment>
<comment type="subunit">
    <molecule>Outer capsid protein VP5*</molecule>
    <text evidence="1">Homotrimer. The trimer is coiled-coil stabilized by its C-terminus, however, its N-terminus, known as antigen domain or 'body', seems to be flexible allowing it to self-associate either as a dimer or a trimer.</text>
</comment>
<comment type="subcellular location">
    <molecule>Outer capsid protein VP4</molecule>
    <subcellularLocation>
        <location evidence="1">Virion</location>
    </subcellularLocation>
    <subcellularLocation>
        <location evidence="1">Host rough endoplasmic reticulum</location>
    </subcellularLocation>
    <subcellularLocation>
        <location evidence="1">Host cell membrane</location>
    </subcellularLocation>
    <subcellularLocation>
        <location evidence="1">Host cytoplasm</location>
        <location evidence="1">Host cytoskeleton</location>
    </subcellularLocation>
    <subcellularLocation>
        <location evidence="1">Host endoplasmic reticulum-Golgi intermediate compartment</location>
    </subcellularLocation>
    <text evidence="1">The outer layer contains 180 copies of VP4, grouped as 60 dimers. Immature double-layered particles assembled in the cytoplasm bud across the membrane of the endoplasmic reticulum, acquiring during this process a transient lipid membrane that is modified with the ER resident viral glycoproteins NSP4 and VP7; these enveloped particles also contain VP4. As the particles move towards the interior of the ER cisternae, the transient lipid membrane and the non-structural protein NSP4 are lost, while the virus surface proteins VP4 and VP7 rearrange to form the outermost virus protein layer, yielding mature infectious triple-layered particles. VP4 also seems to associate with lipid rafts of the host cell membrane probably for the exit of the virus from the infected cell by an alternate pathway.</text>
</comment>
<comment type="subcellular location">
    <molecule>Outer capsid protein VP8*</molecule>
    <subcellularLocation>
        <location evidence="1">Virion</location>
    </subcellularLocation>
    <text evidence="1">Outer capsid protein.</text>
</comment>
<comment type="subcellular location">
    <molecule>Outer capsid protein VP5*</molecule>
    <subcellularLocation>
        <location evidence="1">Virion</location>
    </subcellularLocation>
    <text evidence="1">Outer capsid protein.</text>
</comment>
<comment type="domain">
    <molecule>Outer capsid protein VP4</molecule>
    <text evidence="1">The VP4 spike is divided into a foot, a stalk and body, and a head.</text>
</comment>
<comment type="PTM">
    <molecule>Outer capsid protein VP4</molecule>
    <text evidence="1">Proteolytic cleavage by trypsin results in activation of VP4 functions and greatly increases infectivity. The penetration into the host cell is dependent on trypsin treatment of VP4. It produces two peptides, VP5* and VP8* that remain associated with the virion. Cleavage of VP4 by trypsin probably occurs in vivo in the lumen of the intestine prior to infection of enterocytes. Trypsin seems to be incorporated into the three-layered viral particles but remains inactive as long as the viral outer capsid is intact and would only be activated upon the solubilization of the latter.</text>
</comment>
<comment type="miscellaneous">
    <text evidence="2 3">This strain probably does not use sialic acid to attach to the host cell.</text>
</comment>
<comment type="miscellaneous">
    <text evidence="1">In group A rotaviruses, VP4 defines the P serotype.</text>
</comment>
<comment type="miscellaneous">
    <text evidence="1">Some rotavirus strains are neuraminidase-sensitive and require sialic acid to attach to the cell surface. Some rotavirus strains are integrin-dependent. Some rotavirus strains depend on ganglioside for their entry into the host cell. Hsp70 also seems to be involved in the entry of some strains.</text>
</comment>
<comment type="similarity">
    <text evidence="1">Belongs to the rotavirus VP4 family.</text>
</comment>
<name>VP4_ROTB4</name>
<organism>
    <name type="scientific">Rotavirus A (strain RVA/Cow/United States/B641/XXXX/G6P7[5])</name>
    <name type="common">RV-A</name>
    <dbReference type="NCBI Taxonomy" id="10928"/>
    <lineage>
        <taxon>Viruses</taxon>
        <taxon>Riboviria</taxon>
        <taxon>Orthornavirae</taxon>
        <taxon>Duplornaviricota</taxon>
        <taxon>Resentoviricetes</taxon>
        <taxon>Reovirales</taxon>
        <taxon>Sedoreoviridae</taxon>
        <taxon>Rotavirus</taxon>
        <taxon>Rotavirus A</taxon>
    </lineage>
</organism>
<feature type="chain" id="PRO_0000041006" description="Outer capsid protein VP4" evidence="1">
    <location>
        <begin position="1"/>
        <end position="776"/>
    </location>
</feature>
<feature type="chain" id="PRO_0000041007" description="Outer capsid protein VP8*" evidence="1">
    <location>
        <begin position="1"/>
        <end position="231"/>
    </location>
</feature>
<feature type="chain" id="PRO_0000041008" description="Outer capsid protein VP5*" evidence="1">
    <location>
        <begin position="248"/>
        <end position="776"/>
    </location>
</feature>
<feature type="region of interest" description="Spike head" evidence="1">
    <location>
        <begin position="65"/>
        <end position="224"/>
    </location>
</feature>
<feature type="region of interest" description="Spike body and stalk (antigen domain)" evidence="1">
    <location>
        <begin position="248"/>
        <end position="479"/>
    </location>
</feature>
<feature type="region of interest" description="Hydrophobic; possible role in virus entry into host cell" evidence="1">
    <location>
        <begin position="389"/>
        <end position="409"/>
    </location>
</feature>
<feature type="region of interest" description="Spike foot" evidence="1">
    <location>
        <begin position="510"/>
        <end position="776"/>
    </location>
</feature>
<feature type="coiled-coil region" evidence="1">
    <location>
        <begin position="484"/>
        <end position="518"/>
    </location>
</feature>
<feature type="short sequence motif" description="DGE motif; interaction with ITGA2/ITGB1 heterodimer" evidence="1">
    <location>
        <begin position="308"/>
        <end position="310"/>
    </location>
</feature>
<feature type="short sequence motif" description="YGL motif; interaction with ITGA4" evidence="1">
    <location>
        <begin position="448"/>
        <end position="450"/>
    </location>
</feature>
<feature type="site" description="Cleavage" evidence="1">
    <location>
        <begin position="231"/>
        <end position="232"/>
    </location>
</feature>
<feature type="site" description="Cleavage" evidence="1">
    <location>
        <begin position="241"/>
        <end position="242"/>
    </location>
</feature>
<feature type="site" description="Cleavage; associated with enhancement of infectivity" evidence="1">
    <location>
        <begin position="247"/>
        <end position="248"/>
    </location>
</feature>
<feature type="disulfide bond" evidence="1">
    <location>
        <begin position="318"/>
        <end position="380"/>
    </location>
</feature>